<organism>
    <name type="scientific">Shewanella baltica (strain OS223)</name>
    <dbReference type="NCBI Taxonomy" id="407976"/>
    <lineage>
        <taxon>Bacteria</taxon>
        <taxon>Pseudomonadati</taxon>
        <taxon>Pseudomonadota</taxon>
        <taxon>Gammaproteobacteria</taxon>
        <taxon>Alteromonadales</taxon>
        <taxon>Shewanellaceae</taxon>
        <taxon>Shewanella</taxon>
    </lineage>
</organism>
<reference key="1">
    <citation type="submission" date="2008-12" db="EMBL/GenBank/DDBJ databases">
        <title>Complete sequence of chromosome of Shewanella baltica OS223.</title>
        <authorList>
            <consortium name="US DOE Joint Genome Institute"/>
            <person name="Lucas S."/>
            <person name="Copeland A."/>
            <person name="Lapidus A."/>
            <person name="Glavina del Rio T."/>
            <person name="Dalin E."/>
            <person name="Tice H."/>
            <person name="Bruce D."/>
            <person name="Goodwin L."/>
            <person name="Pitluck S."/>
            <person name="Chertkov O."/>
            <person name="Meincke L."/>
            <person name="Brettin T."/>
            <person name="Detter J.C."/>
            <person name="Han C."/>
            <person name="Kuske C.R."/>
            <person name="Larimer F."/>
            <person name="Land M."/>
            <person name="Hauser L."/>
            <person name="Kyrpides N."/>
            <person name="Ovchinnikova G."/>
            <person name="Brettar I."/>
            <person name="Rodrigues J."/>
            <person name="Konstantinidis K."/>
            <person name="Tiedje J."/>
        </authorList>
    </citation>
    <scope>NUCLEOTIDE SEQUENCE [LARGE SCALE GENOMIC DNA]</scope>
    <source>
        <strain>OS223</strain>
    </source>
</reference>
<comment type="function">
    <text evidence="1">Is probably a protein kinase regulator of UbiI activity which is involved in aerobic coenzyme Q (ubiquinone) biosynthesis.</text>
</comment>
<comment type="pathway">
    <text>Cofactor biosynthesis; ubiquinone biosynthesis [regulation].</text>
</comment>
<comment type="subcellular location">
    <subcellularLocation>
        <location evidence="1">Cell inner membrane</location>
        <topology evidence="1">Multi-pass membrane protein</topology>
    </subcellularLocation>
</comment>
<comment type="similarity">
    <text evidence="1">Belongs to the ABC1 family. UbiB subfamily.</text>
</comment>
<protein>
    <recommendedName>
        <fullName evidence="1">Probable protein kinase UbiB</fullName>
        <ecNumber evidence="1">2.7.-.-</ecNumber>
    </recommendedName>
    <alternativeName>
        <fullName evidence="1">Ubiquinone biosynthesis protein UbiB</fullName>
    </alternativeName>
</protein>
<gene>
    <name evidence="1" type="primary">ubiB</name>
    <name type="ordered locus">Sbal223_0443</name>
</gene>
<sequence>MTLASIRRGYHVIKTLLQYGLDDVLPPKMTPWYFKLARNSLFWIRNKHKNKPGGERLKLAMQELGPVYIKLGQMLSTRRDLLSDEWASELAMLQDKVPPFDGALARQAIEAELKAPIESLFDDFNEIPLASASISQVHTATLKSNGKDVVLKVLRPNVETKIQADLQLMSQTAKLIEYLLGEGNRLRPAEVIEDYRVTILGELNLKLEALNAVKLRNNFLDSDALYVPYVYEEFCYPRLMVMERIYGISVSDIAALKAQGTNFKLLAERGVELFFTQVFRDNFFHADMHPGNIFISRDHPENPYYIGLDCGIMGTLSEVDKRYLAENFLAFFNRDYHRIAQLYIESGWVSEKTDLQAFEQAIKVVCEPMFNKPLDEISFGHVLLELFRTARHFDIVVQPQLVLLEKTLLYIEGLGRQLYPQLDLWQTAKPFLEQWMADQVGPKAMFKKVSTKLPYWADKLPEFPELIYDNLKLGRKLLSSQQQMLDKYLKYQQQAHKSNYLLITSAVLLICGTLLINRDATLWTPYVCLVSGIILWFVGWRSRPKNRKF</sequence>
<proteinExistence type="inferred from homology"/>
<dbReference type="EC" id="2.7.-.-" evidence="1"/>
<dbReference type="EMBL" id="CP001252">
    <property type="protein sequence ID" value="ACK44977.1"/>
    <property type="molecule type" value="Genomic_DNA"/>
</dbReference>
<dbReference type="RefSeq" id="WP_011847989.1">
    <property type="nucleotide sequence ID" value="NC_011663.1"/>
</dbReference>
<dbReference type="SMR" id="B8E6B4"/>
<dbReference type="KEGG" id="sbp:Sbal223_0443"/>
<dbReference type="HOGENOM" id="CLU_006533_0_0_6"/>
<dbReference type="UniPathway" id="UPA00232"/>
<dbReference type="Proteomes" id="UP000002507">
    <property type="component" value="Chromosome"/>
</dbReference>
<dbReference type="GO" id="GO:0005886">
    <property type="term" value="C:plasma membrane"/>
    <property type="evidence" value="ECO:0007669"/>
    <property type="project" value="UniProtKB-SubCell"/>
</dbReference>
<dbReference type="GO" id="GO:0005524">
    <property type="term" value="F:ATP binding"/>
    <property type="evidence" value="ECO:0007669"/>
    <property type="project" value="UniProtKB-KW"/>
</dbReference>
<dbReference type="GO" id="GO:0004672">
    <property type="term" value="F:protein kinase activity"/>
    <property type="evidence" value="ECO:0007669"/>
    <property type="project" value="UniProtKB-UniRule"/>
</dbReference>
<dbReference type="GO" id="GO:0010795">
    <property type="term" value="P:regulation of ubiquinone biosynthetic process"/>
    <property type="evidence" value="ECO:0007669"/>
    <property type="project" value="UniProtKB-UniRule"/>
</dbReference>
<dbReference type="GO" id="GO:0006744">
    <property type="term" value="P:ubiquinone biosynthetic process"/>
    <property type="evidence" value="ECO:0007669"/>
    <property type="project" value="UniProtKB-UniPathway"/>
</dbReference>
<dbReference type="CDD" id="cd13972">
    <property type="entry name" value="UbiB"/>
    <property type="match status" value="1"/>
</dbReference>
<dbReference type="HAMAP" id="MF_00414">
    <property type="entry name" value="UbiB"/>
    <property type="match status" value="1"/>
</dbReference>
<dbReference type="InterPro" id="IPR004147">
    <property type="entry name" value="ABC1_dom"/>
</dbReference>
<dbReference type="InterPro" id="IPR011009">
    <property type="entry name" value="Kinase-like_dom_sf"/>
</dbReference>
<dbReference type="InterPro" id="IPR010232">
    <property type="entry name" value="UbiB"/>
</dbReference>
<dbReference type="InterPro" id="IPR045308">
    <property type="entry name" value="UbiB_bact"/>
</dbReference>
<dbReference type="InterPro" id="IPR050154">
    <property type="entry name" value="UbiB_kinase"/>
</dbReference>
<dbReference type="NCBIfam" id="NF003404">
    <property type="entry name" value="PRK04750.1"/>
    <property type="match status" value="1"/>
</dbReference>
<dbReference type="NCBIfam" id="TIGR01982">
    <property type="entry name" value="UbiB"/>
    <property type="match status" value="1"/>
</dbReference>
<dbReference type="PANTHER" id="PTHR10566">
    <property type="entry name" value="CHAPERONE-ACTIVITY OF BC1 COMPLEX CABC1 -RELATED"/>
    <property type="match status" value="1"/>
</dbReference>
<dbReference type="PANTHER" id="PTHR10566:SF113">
    <property type="entry name" value="PROTEIN ACTIVITY OF BC1 COMPLEX KINASE 7, CHLOROPLASTIC"/>
    <property type="match status" value="1"/>
</dbReference>
<dbReference type="Pfam" id="PF03109">
    <property type="entry name" value="ABC1"/>
    <property type="match status" value="1"/>
</dbReference>
<dbReference type="SUPFAM" id="SSF56112">
    <property type="entry name" value="Protein kinase-like (PK-like)"/>
    <property type="match status" value="1"/>
</dbReference>
<name>UBIB_SHEB2</name>
<feature type="chain" id="PRO_1000134820" description="Probable protein kinase UbiB">
    <location>
        <begin position="1"/>
        <end position="549"/>
    </location>
</feature>
<feature type="transmembrane region" description="Helical" evidence="1">
    <location>
        <begin position="496"/>
        <end position="516"/>
    </location>
</feature>
<feature type="transmembrane region" description="Helical" evidence="1">
    <location>
        <begin position="520"/>
        <end position="540"/>
    </location>
</feature>
<feature type="domain" description="Protein kinase" evidence="1">
    <location>
        <begin position="123"/>
        <end position="501"/>
    </location>
</feature>
<feature type="active site" description="Proton acceptor" evidence="1">
    <location>
        <position position="287"/>
    </location>
</feature>
<feature type="binding site" evidence="1">
    <location>
        <begin position="129"/>
        <end position="137"/>
    </location>
    <ligand>
        <name>ATP</name>
        <dbReference type="ChEBI" id="CHEBI:30616"/>
    </ligand>
</feature>
<feature type="binding site" evidence="1">
    <location>
        <position position="152"/>
    </location>
    <ligand>
        <name>ATP</name>
        <dbReference type="ChEBI" id="CHEBI:30616"/>
    </ligand>
</feature>
<keyword id="KW-0067">ATP-binding</keyword>
<keyword id="KW-0997">Cell inner membrane</keyword>
<keyword id="KW-1003">Cell membrane</keyword>
<keyword id="KW-0418">Kinase</keyword>
<keyword id="KW-0472">Membrane</keyword>
<keyword id="KW-0547">Nucleotide-binding</keyword>
<keyword id="KW-0808">Transferase</keyword>
<keyword id="KW-0812">Transmembrane</keyword>
<keyword id="KW-1133">Transmembrane helix</keyword>
<keyword id="KW-0831">Ubiquinone biosynthesis</keyword>
<accession>B8E6B4</accession>
<evidence type="ECO:0000255" key="1">
    <source>
        <dbReference type="HAMAP-Rule" id="MF_00414"/>
    </source>
</evidence>